<feature type="chain" id="PRO_0000385414" description="Major capsid protein 1">
    <location>
        <begin position="1"/>
        <end position="204"/>
    </location>
</feature>
<protein>
    <recommendedName>
        <fullName>Major capsid protein 1</fullName>
    </recommendedName>
    <alternativeName>
        <fullName>MCP1</fullName>
    </alternativeName>
</protein>
<accession>Q914J4</accession>
<organism>
    <name type="scientific">Sulfolobus islandicus filamentous virus (isolate Iceland/Hveragerdi)</name>
    <name type="common">SIFV</name>
    <dbReference type="NCBI Taxonomy" id="654908"/>
    <lineage>
        <taxon>Viruses</taxon>
        <taxon>Adnaviria</taxon>
        <taxon>Zilligvirae</taxon>
        <taxon>Taleaviricota</taxon>
        <taxon>Tokiviricetes</taxon>
        <taxon>Ligamenvirales</taxon>
        <taxon>Lipothrixviridae</taxon>
        <taxon>Betalipothrixvirus</taxon>
        <taxon>Sulfolobus islandicus filamentous virus</taxon>
    </lineage>
</organism>
<reference key="1">
    <citation type="journal article" date="2000" name="Virology">
        <title>A novel lipothrixvirus, SIFV, of the extremely thermophilic crenarchaeon Sulfolobus.</title>
        <authorList>
            <person name="Arnold H.P."/>
            <person name="Zillig W."/>
            <person name="Ziese U."/>
            <person name="Holz I."/>
            <person name="Crosby M."/>
            <person name="Utterback T."/>
            <person name="Weidmann J.F."/>
            <person name="Umayam L.A."/>
            <person name="Teffera K."/>
            <person name="Kristjanson J.K."/>
            <person name="Klenk H.P."/>
            <person name="Nelson K.E."/>
            <person name="Fraser C.M."/>
        </authorList>
    </citation>
    <scope>NUCLEOTIDE SEQUENCE [GENOMIC DNA]</scope>
</reference>
<reference evidence="2" key="2">
    <citation type="journal article" date="2020" name="Proc. Natl. Acad. Sci. U.S.A.">
        <title>Structures of filamentous viruses infecting hyperthermophilic archaea explain DNA stabilization in extreme environments.</title>
        <authorList>
            <person name="Wang F."/>
            <person name="Baquero D.P."/>
            <person name="Beltran L.C."/>
            <person name="Su Z."/>
            <person name="Osinski T."/>
            <person name="Zheng W."/>
            <person name="Prangishvili D."/>
            <person name="Krupovic M."/>
            <person name="Egelman E.H."/>
        </authorList>
    </citation>
    <scope>STRUCTURE BY ELECTRON MICROSCOPY (4.00 ANGSTROMS)</scope>
    <scope>SUBUNIT</scope>
    <scope>DOMAIN</scope>
    <scope>FUNCTION</scope>
    <scope>SUBCELLULAR LOCATION</scope>
</reference>
<dbReference type="EMBL" id="AF440571">
    <property type="protein sequence ID" value="AAL27747.1"/>
    <property type="molecule type" value="Genomic_DNA"/>
</dbReference>
<dbReference type="RefSeq" id="NP_445701.1">
    <property type="nucleotide sequence ID" value="NC_003214.2"/>
</dbReference>
<dbReference type="PDB" id="6WQ2">
    <property type="method" value="EM"/>
    <property type="resolution" value="4.00 A"/>
    <property type="chains" value="a/b/c/d/e/f/g/h/i/j/k/l/m/n/p/r/t=1-204"/>
</dbReference>
<dbReference type="PDBsum" id="6WQ2"/>
<dbReference type="EMDB" id="EMD-21868"/>
<dbReference type="SMR" id="Q914J4"/>
<dbReference type="GeneID" id="922344"/>
<dbReference type="KEGG" id="vg:922344"/>
<dbReference type="Proteomes" id="UP000007017">
    <property type="component" value="Segment"/>
</dbReference>
<dbReference type="GO" id="GO:0019029">
    <property type="term" value="C:helical viral capsid"/>
    <property type="evidence" value="ECO:0000314"/>
    <property type="project" value="UniProtKB"/>
</dbReference>
<dbReference type="GO" id="GO:0003677">
    <property type="term" value="F:DNA binding"/>
    <property type="evidence" value="ECO:0000314"/>
    <property type="project" value="UniProtKB"/>
</dbReference>
<gene>
    <name type="primary">SIFV0036</name>
</gene>
<comment type="function">
    <text evidence="1">Self-assembles to form a helical, filamentous nucleocapsid mesuring 1980 nm in length and 24 nm in width. Together with capsid protein 2, wraps arounds the DNA and maintains it in an A-form. Capsid proteins probably maintain the DNA in A-form by non-specific desolvation and specific coordination of the DNA phosphate groups by positively charged residues. This certainly protects the viral DNA under conditions such as the extreme desiccation of its host.</text>
</comment>
<comment type="subunit">
    <text evidence="1">Heterodimer composed of major capsid protein 1 and major capsid protein 2.</text>
</comment>
<comment type="subcellular location">
    <subcellularLocation>
        <location evidence="1">Virion</location>
    </subcellularLocation>
</comment>
<comment type="domain">
    <text evidence="1">The N-terminus projects into a DNA groove.</text>
</comment>
<organismHost>
    <name type="scientific">Saccharolobus islandicus</name>
    <name type="common">Sulfolobus islandicus</name>
    <dbReference type="NCBI Taxonomy" id="43080"/>
</organismHost>
<keyword id="KW-0002">3D-structure</keyword>
<keyword id="KW-0238">DNA-binding</keyword>
<keyword id="KW-1185">Reference proteome</keyword>
<keyword id="KW-0946">Virion</keyword>
<name>CAPS1_SIFVH</name>
<sequence length="204" mass="22533">MAGRQSHKKIDVRNDTSTRYKGKLYGIFVNYMGEKYAQQLVENMYSNYNDVFVEIYNKMHNALRPTLVKLAGAGATFPLWQLVNEAIYAVYLTHKETASFLVTKYVARGVPAMTVKTLLAEVGNQLKELVPAVAEQIGSVTLDHTNVVSTVDNIVTSMPALPNSYAGVLMKTKVPTVTPHYAGTGTFSSMESAYKALEDIERGL</sequence>
<proteinExistence type="evidence at protein level"/>
<evidence type="ECO:0000269" key="1">
    <source>
    </source>
</evidence>
<evidence type="ECO:0007744" key="2">
    <source>
        <dbReference type="PDB" id="6WQ2"/>
    </source>
</evidence>